<feature type="chain" id="PRO_0000052305" description="Putative cytochrome P450 143">
    <location>
        <begin position="1"/>
        <end position="393"/>
    </location>
</feature>
<feature type="binding site" description="axial binding residue" evidence="1">
    <location>
        <position position="342"/>
    </location>
    <ligand>
        <name>heme</name>
        <dbReference type="ChEBI" id="CHEBI:30413"/>
    </ligand>
    <ligandPart>
        <name>Fe</name>
        <dbReference type="ChEBI" id="CHEBI:18248"/>
    </ligandPart>
</feature>
<proteinExistence type="inferred from homology"/>
<gene>
    <name type="primary">cyp143</name>
    <name type="ordered locus">BQ2027_MB1813C</name>
</gene>
<reference key="1">
    <citation type="journal article" date="2003" name="Proc. Natl. Acad. Sci. U.S.A.">
        <title>The complete genome sequence of Mycobacterium bovis.</title>
        <authorList>
            <person name="Garnier T."/>
            <person name="Eiglmeier K."/>
            <person name="Camus J.-C."/>
            <person name="Medina N."/>
            <person name="Mansoor H."/>
            <person name="Pryor M."/>
            <person name="Duthoy S."/>
            <person name="Grondin S."/>
            <person name="Lacroix C."/>
            <person name="Monsempe C."/>
            <person name="Simon S."/>
            <person name="Harris B."/>
            <person name="Atkin R."/>
            <person name="Doggett J."/>
            <person name="Mayes R."/>
            <person name="Keating L."/>
            <person name="Wheeler P.R."/>
            <person name="Parkhill J."/>
            <person name="Barrell B.G."/>
            <person name="Cole S.T."/>
            <person name="Gordon S.V."/>
            <person name="Hewinson R.G."/>
        </authorList>
    </citation>
    <scope>NUCLEOTIDE SEQUENCE [LARGE SCALE GENOMIC DNA]</scope>
    <source>
        <strain>ATCC BAA-935 / AF2122/97</strain>
    </source>
</reference>
<reference key="2">
    <citation type="journal article" date="2017" name="Genome Announc.">
        <title>Updated reference genome sequence and annotation of Mycobacterium bovis AF2122/97.</title>
        <authorList>
            <person name="Malone K.M."/>
            <person name="Farrell D."/>
            <person name="Stuber T.P."/>
            <person name="Schubert O.T."/>
            <person name="Aebersold R."/>
            <person name="Robbe-Austerman S."/>
            <person name="Gordon S.V."/>
        </authorList>
    </citation>
    <scope>NUCLEOTIDE SEQUENCE [LARGE SCALE GENOMIC DNA]</scope>
    <scope>GENOME REANNOTATION</scope>
    <source>
        <strain>ATCC BAA-935 / AF2122/97</strain>
    </source>
</reference>
<keyword id="KW-0349">Heme</keyword>
<keyword id="KW-0408">Iron</keyword>
<keyword id="KW-0479">Metal-binding</keyword>
<keyword id="KW-0503">Monooxygenase</keyword>
<keyword id="KW-0560">Oxidoreductase</keyword>
<keyword id="KW-1185">Reference proteome</keyword>
<comment type="cofactor">
    <cofactor evidence="1">
        <name>heme</name>
        <dbReference type="ChEBI" id="CHEBI:30413"/>
    </cofactor>
</comment>
<comment type="similarity">
    <text evidence="2">Belongs to the cytochrome P450 family.</text>
</comment>
<accession>P63724</accession>
<accession>A0A1R3XZB4</accession>
<accession>O53936</accession>
<accession>X2BIG2</accession>
<evidence type="ECO:0000250" key="1"/>
<evidence type="ECO:0000305" key="2"/>
<protein>
    <recommendedName>
        <fullName>Putative cytochrome P450 143</fullName>
        <ecNumber>1.14.-.-</ecNumber>
    </recommendedName>
</protein>
<dbReference type="EC" id="1.14.-.-"/>
<dbReference type="EMBL" id="LT708304">
    <property type="protein sequence ID" value="SIU00417.1"/>
    <property type="molecule type" value="Genomic_DNA"/>
</dbReference>
<dbReference type="RefSeq" id="NP_855466.1">
    <property type="nucleotide sequence ID" value="NC_002945.3"/>
</dbReference>
<dbReference type="RefSeq" id="WP_003408802.1">
    <property type="nucleotide sequence ID" value="NC_002945.4"/>
</dbReference>
<dbReference type="SMR" id="P63724"/>
<dbReference type="KEGG" id="mbo:BQ2027_MB1813C"/>
<dbReference type="PATRIC" id="fig|233413.5.peg.1992"/>
<dbReference type="Proteomes" id="UP000001419">
    <property type="component" value="Chromosome"/>
</dbReference>
<dbReference type="GO" id="GO:0020037">
    <property type="term" value="F:heme binding"/>
    <property type="evidence" value="ECO:0007669"/>
    <property type="project" value="InterPro"/>
</dbReference>
<dbReference type="GO" id="GO:0005506">
    <property type="term" value="F:iron ion binding"/>
    <property type="evidence" value="ECO:0007669"/>
    <property type="project" value="InterPro"/>
</dbReference>
<dbReference type="GO" id="GO:0004497">
    <property type="term" value="F:monooxygenase activity"/>
    <property type="evidence" value="ECO:0007669"/>
    <property type="project" value="UniProtKB-KW"/>
</dbReference>
<dbReference type="GO" id="GO:0016705">
    <property type="term" value="F:oxidoreductase activity, acting on paired donors, with incorporation or reduction of molecular oxygen"/>
    <property type="evidence" value="ECO:0007669"/>
    <property type="project" value="InterPro"/>
</dbReference>
<dbReference type="CDD" id="cd11035">
    <property type="entry name" value="P450cam-like"/>
    <property type="match status" value="1"/>
</dbReference>
<dbReference type="Gene3D" id="1.10.630.10">
    <property type="entry name" value="Cytochrome P450"/>
    <property type="match status" value="1"/>
</dbReference>
<dbReference type="InterPro" id="IPR001128">
    <property type="entry name" value="Cyt_P450"/>
</dbReference>
<dbReference type="InterPro" id="IPR002397">
    <property type="entry name" value="Cyt_P450_B"/>
</dbReference>
<dbReference type="InterPro" id="IPR017972">
    <property type="entry name" value="Cyt_P450_CS"/>
</dbReference>
<dbReference type="InterPro" id="IPR036396">
    <property type="entry name" value="Cyt_P450_sf"/>
</dbReference>
<dbReference type="PANTHER" id="PTHR46696">
    <property type="entry name" value="P450, PUTATIVE (EUROFUNG)-RELATED"/>
    <property type="match status" value="1"/>
</dbReference>
<dbReference type="PANTHER" id="PTHR46696:SF6">
    <property type="entry name" value="P450, PUTATIVE (EUROFUNG)-RELATED"/>
    <property type="match status" value="1"/>
</dbReference>
<dbReference type="Pfam" id="PF00067">
    <property type="entry name" value="p450"/>
    <property type="match status" value="2"/>
</dbReference>
<dbReference type="PRINTS" id="PR00359">
    <property type="entry name" value="BP450"/>
</dbReference>
<dbReference type="PRINTS" id="PR00385">
    <property type="entry name" value="P450"/>
</dbReference>
<dbReference type="SUPFAM" id="SSF48264">
    <property type="entry name" value="Cytochrome P450"/>
    <property type="match status" value="1"/>
</dbReference>
<dbReference type="PROSITE" id="PS00086">
    <property type="entry name" value="CYTOCHROME_P450"/>
    <property type="match status" value="1"/>
</dbReference>
<organism>
    <name type="scientific">Mycobacterium bovis (strain ATCC BAA-935 / AF2122/97)</name>
    <dbReference type="NCBI Taxonomy" id="233413"/>
    <lineage>
        <taxon>Bacteria</taxon>
        <taxon>Bacillati</taxon>
        <taxon>Actinomycetota</taxon>
        <taxon>Actinomycetes</taxon>
        <taxon>Mycobacteriales</taxon>
        <taxon>Mycobacteriaceae</taxon>
        <taxon>Mycobacterium</taxon>
        <taxon>Mycobacterium tuberculosis complex</taxon>
    </lineage>
</organism>
<sequence>MTTPGEDHAGSFYLPRLEYSTLPMAVDRGVGWKTLRDAGPVVFMNGWYYLTRREDVLAALRNPKVFSSRKALQPPGNPLPVVPLAFDPPEHTRYRRILQPYFSPAALSKALPSLRRHTVAMIDAIAGRGECEAMADLANLFPFQLFLVLYGLPLEDRDRLIGWKDAVIAMSDRPHPTEADVAAARELLEYLTAMVAERRRNPGPDVLSQVQIGEDPLSEIEVLGLSHLLILAGLDTVTAAVGFSLLELARRPQLRAMLRDNPKQIRVFIEEIVRLEPSAPVAPRVTTEPVTVGGMTLPAGSPVRLCMAAVNRDGSDAMSTDELVMDGKVHRHWGFGGGPHRCLGSHLARLELTLLVGEWLNQIPDFELAPDYAPEIRFPSKSFALKNLPLRWS</sequence>
<name>CP143_MYCBO</name>